<gene>
    <name evidence="2" type="primary">fdx2</name>
    <name type="synonym">fdx1l</name>
    <name type="ORF">zgc:153554</name>
</gene>
<proteinExistence type="evidence at transcript level"/>
<evidence type="ECO:0000250" key="1">
    <source>
        <dbReference type="UniProtKB" id="P10109"/>
    </source>
</evidence>
<evidence type="ECO:0000250" key="2">
    <source>
        <dbReference type="UniProtKB" id="Q6P4F2"/>
    </source>
</evidence>
<evidence type="ECO:0000250" key="3">
    <source>
        <dbReference type="UniProtKB" id="Q9H1K1"/>
    </source>
</evidence>
<evidence type="ECO:0000255" key="4"/>
<evidence type="ECO:0000255" key="5">
    <source>
        <dbReference type="PROSITE-ProRule" id="PRU00465"/>
    </source>
</evidence>
<evidence type="ECO:0000305" key="6"/>
<accession>Q08C57</accession>
<reference key="1">
    <citation type="submission" date="2006-09" db="EMBL/GenBank/DDBJ databases">
        <authorList>
            <consortium name="NIH - Zebrafish Gene Collection (ZGC) project"/>
        </authorList>
    </citation>
    <scope>NUCLEOTIDE SEQUENCE [LARGE SCALE MRNA]</scope>
    <source>
        <tissue>Eye</tissue>
    </source>
</reference>
<keyword id="KW-0001">2Fe-2S</keyword>
<keyword id="KW-0249">Electron transport</keyword>
<keyword id="KW-0408">Iron</keyword>
<keyword id="KW-0411">Iron-sulfur</keyword>
<keyword id="KW-0479">Metal-binding</keyword>
<keyword id="KW-0496">Mitochondrion</keyword>
<keyword id="KW-1185">Reference proteome</keyword>
<keyword id="KW-0809">Transit peptide</keyword>
<keyword id="KW-0813">Transport</keyword>
<protein>
    <recommendedName>
        <fullName evidence="2">Ferredoxin-2, mitochondrial</fullName>
    </recommendedName>
    <alternativeName>
        <fullName>Adrenodoxin-like protein</fullName>
    </alternativeName>
    <alternativeName>
        <fullName>Ferredoxin-1-like protein</fullName>
    </alternativeName>
</protein>
<feature type="transit peptide" description="Mitochondrion" evidence="4">
    <location>
        <begin position="1"/>
        <end position="61"/>
    </location>
</feature>
<feature type="chain" id="PRO_0000325954" description="Ferredoxin-2, mitochondrial">
    <location>
        <begin position="62"/>
        <end position="195"/>
    </location>
</feature>
<feature type="domain" description="2Fe-2S ferredoxin-type" evidence="5">
    <location>
        <begin position="81"/>
        <end position="182"/>
    </location>
</feature>
<feature type="binding site" evidence="5">
    <location>
        <position position="117"/>
    </location>
    <ligand>
        <name>[2Fe-2S] cluster</name>
        <dbReference type="ChEBI" id="CHEBI:190135"/>
    </ligand>
</feature>
<feature type="binding site" evidence="5">
    <location>
        <position position="123"/>
    </location>
    <ligand>
        <name>[2Fe-2S] cluster</name>
        <dbReference type="ChEBI" id="CHEBI:190135"/>
    </ligand>
</feature>
<feature type="binding site" evidence="5">
    <location>
        <position position="126"/>
    </location>
    <ligand>
        <name>[2Fe-2S] cluster</name>
        <dbReference type="ChEBI" id="CHEBI:190135"/>
    </ligand>
</feature>
<feature type="binding site" evidence="5">
    <location>
        <position position="163"/>
    </location>
    <ligand>
        <name>[2Fe-2S] cluster</name>
        <dbReference type="ChEBI" id="CHEBI:190135"/>
    </ligand>
</feature>
<organism>
    <name type="scientific">Danio rerio</name>
    <name type="common">Zebrafish</name>
    <name type="synonym">Brachydanio rerio</name>
    <dbReference type="NCBI Taxonomy" id="7955"/>
    <lineage>
        <taxon>Eukaryota</taxon>
        <taxon>Metazoa</taxon>
        <taxon>Chordata</taxon>
        <taxon>Craniata</taxon>
        <taxon>Vertebrata</taxon>
        <taxon>Euteleostomi</taxon>
        <taxon>Actinopterygii</taxon>
        <taxon>Neopterygii</taxon>
        <taxon>Teleostei</taxon>
        <taxon>Ostariophysi</taxon>
        <taxon>Cypriniformes</taxon>
        <taxon>Danionidae</taxon>
        <taxon>Danioninae</taxon>
        <taxon>Danio</taxon>
    </lineage>
</organism>
<comment type="function">
    <text evidence="2 3">Electron donor, of the core iron-sulfur cluster (ISC) assembly complex, that acts to reduce the persulfide into sulfide during [2Fe-2S] clusters assembly on the scaffolding protein ISCU (By similarity). The core iron-sulfur cluster (ISC) assembly complex is involved in the de novo synthesis of a [2Fe-2S] cluster, the first step of the mitochondrial iron-sulfur protein biogenesis. This process is initiated by the cysteine desulfurase complex (NFS1:LYRM4:NDUFAB1) that produces persulfide which is delivered on the scaffold protein ISCU in a FXN-dependent manner. Then this complex is stabilized by FDX2 which provides reducing equivalents to accomplish the [2Fe-2S] cluster assembly. Finally, the [2Fe-2S] cluster is transferred from ISCU to chaperone proteins, including HSCB, HSPA9 and GLRX5 (By similarity). Essential for coenzyme Q biosynthesis: together with FDXR, transfers the electrons required for the hydroxylation reaction performed by COQ6 (By similarity).</text>
</comment>
<comment type="cofactor">
    <cofactor evidence="2">
        <name>[2Fe-2S] cluster</name>
        <dbReference type="ChEBI" id="CHEBI:190135"/>
    </cofactor>
    <text evidence="2">Binds 1 [2Fe-2S] cluster.</text>
</comment>
<comment type="subunit">
    <text evidence="2">Component of the mitochondrial core iron-sulfur cluster (ISC) complex composed of NFS1, LYRM4, NDUFAB1, ISCU, FXN, and FDX2; this complex is a heterohexamer containing two copies of each monomer. Form a heterodimer complex with NFS1.</text>
</comment>
<comment type="subcellular location">
    <subcellularLocation>
        <location evidence="2">Mitochondrion</location>
    </subcellularLocation>
    <subcellularLocation>
        <location evidence="1">Mitochondrion matrix</location>
    </subcellularLocation>
</comment>
<comment type="similarity">
    <text evidence="6">Belongs to the adrenodoxin/putidaredoxin family.</text>
</comment>
<name>FDX2_DANRE</name>
<dbReference type="EMBL" id="BC124384">
    <property type="protein sequence ID" value="AAI24385.1"/>
    <property type="molecule type" value="mRNA"/>
</dbReference>
<dbReference type="RefSeq" id="NP_001070132.1">
    <property type="nucleotide sequence ID" value="NM_001076664.2"/>
</dbReference>
<dbReference type="SMR" id="Q08C57"/>
<dbReference type="FunCoup" id="Q08C57">
    <property type="interactions" value="1227"/>
</dbReference>
<dbReference type="STRING" id="7955.ENSDARP00000131094"/>
<dbReference type="PaxDb" id="7955-ENSDARP00000088240"/>
<dbReference type="GeneID" id="767726"/>
<dbReference type="KEGG" id="dre:767726"/>
<dbReference type="AGR" id="ZFIN:ZDB-GENE-060929-1046"/>
<dbReference type="CTD" id="112812"/>
<dbReference type="ZFIN" id="ZDB-GENE-060929-1046">
    <property type="gene designation" value="fdx2"/>
</dbReference>
<dbReference type="eggNOG" id="KOG3309">
    <property type="taxonomic scope" value="Eukaryota"/>
</dbReference>
<dbReference type="InParanoid" id="Q08C57"/>
<dbReference type="OrthoDB" id="268593at2759"/>
<dbReference type="PhylomeDB" id="Q08C57"/>
<dbReference type="Reactome" id="R-DRE-1362409">
    <property type="pathway name" value="Mitochondrial iron-sulfur cluster biogenesis"/>
</dbReference>
<dbReference type="Reactome" id="R-DRE-196108">
    <property type="pathway name" value="Pregnenolone biosynthesis"/>
</dbReference>
<dbReference type="Reactome" id="R-DRE-211976">
    <property type="pathway name" value="Endogenous sterols"/>
</dbReference>
<dbReference type="Reactome" id="R-DRE-2395516">
    <property type="pathway name" value="Electron transport from NADPH to Ferredoxin"/>
</dbReference>
<dbReference type="PRO" id="PR:Q08C57"/>
<dbReference type="Proteomes" id="UP000000437">
    <property type="component" value="Chromosome 6"/>
</dbReference>
<dbReference type="GO" id="GO:0005759">
    <property type="term" value="C:mitochondrial matrix"/>
    <property type="evidence" value="ECO:0007669"/>
    <property type="project" value="UniProtKB-SubCell"/>
</dbReference>
<dbReference type="GO" id="GO:0005739">
    <property type="term" value="C:mitochondrion"/>
    <property type="evidence" value="ECO:0000318"/>
    <property type="project" value="GO_Central"/>
</dbReference>
<dbReference type="GO" id="GO:0051537">
    <property type="term" value="F:2 iron, 2 sulfur cluster binding"/>
    <property type="evidence" value="ECO:0007669"/>
    <property type="project" value="UniProtKB-KW"/>
</dbReference>
<dbReference type="GO" id="GO:0009055">
    <property type="term" value="F:electron transfer activity"/>
    <property type="evidence" value="ECO:0000250"/>
    <property type="project" value="UniProtKB"/>
</dbReference>
<dbReference type="GO" id="GO:0046872">
    <property type="term" value="F:metal ion binding"/>
    <property type="evidence" value="ECO:0007669"/>
    <property type="project" value="UniProtKB-KW"/>
</dbReference>
<dbReference type="GO" id="GO:0044571">
    <property type="term" value="P:[2Fe-2S] cluster assembly"/>
    <property type="evidence" value="ECO:0000250"/>
    <property type="project" value="UniProtKB"/>
</dbReference>
<dbReference type="GO" id="GO:0044572">
    <property type="term" value="P:[4Fe-4S] cluster assembly"/>
    <property type="evidence" value="ECO:0000250"/>
    <property type="project" value="UniProtKB"/>
</dbReference>
<dbReference type="GO" id="GO:0022900">
    <property type="term" value="P:electron transport chain"/>
    <property type="evidence" value="ECO:0000318"/>
    <property type="project" value="GO_Central"/>
</dbReference>
<dbReference type="GO" id="GO:0140647">
    <property type="term" value="P:P450-containing electron transport chain"/>
    <property type="evidence" value="ECO:0007669"/>
    <property type="project" value="InterPro"/>
</dbReference>
<dbReference type="GO" id="GO:0006744">
    <property type="term" value="P:ubiquinone biosynthetic process"/>
    <property type="evidence" value="ECO:0000250"/>
    <property type="project" value="UniProtKB"/>
</dbReference>
<dbReference type="CDD" id="cd00207">
    <property type="entry name" value="fer2"/>
    <property type="match status" value="1"/>
</dbReference>
<dbReference type="FunFam" id="3.10.20.30:FF:000013">
    <property type="entry name" value="Adrenodoxin, mitochondrial"/>
    <property type="match status" value="1"/>
</dbReference>
<dbReference type="Gene3D" id="3.10.20.30">
    <property type="match status" value="1"/>
</dbReference>
<dbReference type="InterPro" id="IPR036010">
    <property type="entry name" value="2Fe-2S_ferredoxin-like_sf"/>
</dbReference>
<dbReference type="InterPro" id="IPR001041">
    <property type="entry name" value="2Fe-2S_ferredoxin-type"/>
</dbReference>
<dbReference type="InterPro" id="IPR001055">
    <property type="entry name" value="Adrenodoxin-like"/>
</dbReference>
<dbReference type="InterPro" id="IPR018298">
    <property type="entry name" value="Adrenodoxin_Fe-S_BS"/>
</dbReference>
<dbReference type="InterPro" id="IPR012675">
    <property type="entry name" value="Beta-grasp_dom_sf"/>
</dbReference>
<dbReference type="PANTHER" id="PTHR23426:SF65">
    <property type="entry name" value="FERREDOXIN-2, MITOCHONDRIAL"/>
    <property type="match status" value="1"/>
</dbReference>
<dbReference type="PANTHER" id="PTHR23426">
    <property type="entry name" value="FERREDOXIN/ADRENODOXIN"/>
    <property type="match status" value="1"/>
</dbReference>
<dbReference type="Pfam" id="PF00111">
    <property type="entry name" value="Fer2"/>
    <property type="match status" value="1"/>
</dbReference>
<dbReference type="PRINTS" id="PR00355">
    <property type="entry name" value="ADRENODOXIN"/>
</dbReference>
<dbReference type="SUPFAM" id="SSF54292">
    <property type="entry name" value="2Fe-2S ferredoxin-like"/>
    <property type="match status" value="1"/>
</dbReference>
<dbReference type="PROSITE" id="PS51085">
    <property type="entry name" value="2FE2S_FER_2"/>
    <property type="match status" value="1"/>
</dbReference>
<dbReference type="PROSITE" id="PS00814">
    <property type="entry name" value="ADX"/>
    <property type="match status" value="1"/>
</dbReference>
<sequence length="195" mass="21468">MAAAAAVRAGVNFTQRLNRISPVCRVCPLLRLNRCTGAAVRRAVDGFSAPSRRLRTSIGVCQSEDSSAPEEDAHAQEHIVNVVYIDRSGRRIPVQARVGDNVLYLAHKHGIDLEGACEASLACSTCHVYVSSGHYDRLPEPEEREDDMLDMAPLLQENSRLGCQIILTPELDGMELTLPKVTRNFYVDGHVPKPH</sequence>